<organism>
    <name type="scientific">Zygnema circumcarinatum</name>
    <name type="common">Green alga</name>
    <dbReference type="NCBI Taxonomy" id="35869"/>
    <lineage>
        <taxon>Eukaryota</taxon>
        <taxon>Viridiplantae</taxon>
        <taxon>Streptophyta</taxon>
        <taxon>Zygnematophyceae</taxon>
        <taxon>Zygnematophycidae</taxon>
        <taxon>Zygnematales</taxon>
        <taxon>Zygnemataceae</taxon>
        <taxon>Zygnema</taxon>
    </lineage>
</organism>
<protein>
    <recommendedName>
        <fullName evidence="1">Photosystem II CP43 reaction center protein</fullName>
    </recommendedName>
    <alternativeName>
        <fullName evidence="1">PSII 43 kDa protein</fullName>
    </alternativeName>
    <alternativeName>
        <fullName evidence="1">Protein CP-43</fullName>
    </alternativeName>
</protein>
<sequence>MKTLYSLRRSYPVETLFNGTLALGGRDQATTGFAWWSGNARLINLSGKLLGAHVAHAGLIVFWAGAMNLFEVAHFVPEKPMYEQGLILLPHLATLGWGVGPGGEVVDTFPYFVSGVLHLISSAVLGFGGVYHALIGPETLEESFPFFGYVWKDKNKMTTILGIHLILLGAGAFLLVFKALYFGGLYDTWAPGGGDVRKITNITLNPGVIFGYLLKSPFGGEGWIVSVDNLEDIVGGHVWLGSICILGGIWHILTKPFAWARRAFVWSGEAYLSYSLAAISVMGFIACCFVWFNNTAYPSEFYGPTGPEASQAQAFTFLVRDQRLGANVGSAQGPTGLGKYLMRSPTGEIIFGGETMRFWDLRAPWLEPLRGPNGLDLGKLKKDIQPWQERRSAEYMTHAPLGSLNSVGGVATEINAVNYVSPRSWLSTSHFVLGFFFFVGHLWHAGRARAAAAGFEKGIDRDTEPVLFMNPLN</sequence>
<feature type="propeptide" id="PRO_0000431218" evidence="1">
    <location>
        <begin position="1"/>
        <end position="14"/>
    </location>
</feature>
<feature type="chain" id="PRO_0000361512" description="Photosystem II CP43 reaction center protein" evidence="1">
    <location>
        <begin position="15"/>
        <end position="473"/>
    </location>
</feature>
<feature type="transmembrane region" description="Helical" evidence="1">
    <location>
        <begin position="69"/>
        <end position="93"/>
    </location>
</feature>
<feature type="transmembrane region" description="Helical" evidence="1">
    <location>
        <begin position="134"/>
        <end position="155"/>
    </location>
</feature>
<feature type="transmembrane region" description="Helical" evidence="1">
    <location>
        <begin position="178"/>
        <end position="200"/>
    </location>
</feature>
<feature type="transmembrane region" description="Helical" evidence="1">
    <location>
        <begin position="255"/>
        <end position="275"/>
    </location>
</feature>
<feature type="transmembrane region" description="Helical" evidence="1">
    <location>
        <begin position="291"/>
        <end position="312"/>
    </location>
</feature>
<feature type="transmembrane region" description="Helical" evidence="1">
    <location>
        <begin position="447"/>
        <end position="471"/>
    </location>
</feature>
<feature type="binding site" evidence="1">
    <location>
        <position position="367"/>
    </location>
    <ligand>
        <name>[CaMn4O5] cluster</name>
        <dbReference type="ChEBI" id="CHEBI:189552"/>
    </ligand>
</feature>
<feature type="modified residue" description="N-acetylthreonine" evidence="1">
    <location>
        <position position="15"/>
    </location>
</feature>
<feature type="modified residue" description="Phosphothreonine" evidence="1">
    <location>
        <position position="15"/>
    </location>
</feature>
<comment type="function">
    <text evidence="1">One of the components of the core complex of photosystem II (PSII). It binds chlorophyll and helps catalyze the primary light-induced photochemical processes of PSII. PSII is a light-driven water:plastoquinone oxidoreductase, using light energy to abstract electrons from H(2)O, generating O(2) and a proton gradient subsequently used for ATP formation.</text>
</comment>
<comment type="cofactor">
    <text evidence="1">Binds multiple chlorophylls and provides some of the ligands for the Ca-4Mn-5O cluster of the oxygen-evolving complex. It may also provide a ligand for a Cl- that is required for oxygen evolution. PSII binds additional chlorophylls, carotenoids and specific lipids.</text>
</comment>
<comment type="subunit">
    <text evidence="1">PSII is composed of 1 copy each of membrane proteins PsbA, PsbB, PsbC, PsbD, PsbE, PsbF, PsbH, PsbI, PsbJ, PsbK, PsbL, PsbM, PsbT, PsbX, PsbY, PsbZ, Psb30/Ycf12, at least 3 peripheral proteins of the oxygen-evolving complex and a large number of cofactors. It forms dimeric complexes.</text>
</comment>
<comment type="subcellular location">
    <subcellularLocation>
        <location evidence="1">Plastid</location>
        <location evidence="1">Chloroplast thylakoid membrane</location>
        <topology evidence="1">Multi-pass membrane protein</topology>
    </subcellularLocation>
</comment>
<comment type="similarity">
    <text evidence="1">Belongs to the PsbB/PsbC family. PsbC subfamily.</text>
</comment>
<comment type="sequence caution" evidence="2">
    <conflict type="erroneous initiation">
        <sequence resource="EMBL-CDS" id="AAX45838"/>
    </conflict>
    <text>Extended N-terminus.</text>
</comment>
<name>PSBC_ZYGCR</name>
<keyword id="KW-0007">Acetylation</keyword>
<keyword id="KW-0148">Chlorophyll</keyword>
<keyword id="KW-0150">Chloroplast</keyword>
<keyword id="KW-0157">Chromophore</keyword>
<keyword id="KW-0464">Manganese</keyword>
<keyword id="KW-0472">Membrane</keyword>
<keyword id="KW-0479">Metal-binding</keyword>
<keyword id="KW-0597">Phosphoprotein</keyword>
<keyword id="KW-0602">Photosynthesis</keyword>
<keyword id="KW-0604">Photosystem II</keyword>
<keyword id="KW-0934">Plastid</keyword>
<keyword id="KW-0793">Thylakoid</keyword>
<keyword id="KW-0812">Transmembrane</keyword>
<keyword id="KW-1133">Transmembrane helix</keyword>
<evidence type="ECO:0000255" key="1">
    <source>
        <dbReference type="HAMAP-Rule" id="MF_01496"/>
    </source>
</evidence>
<evidence type="ECO:0000305" key="2"/>
<accession>Q32RM6</accession>
<gene>
    <name evidence="1" type="primary">psbC</name>
</gene>
<geneLocation type="chloroplast"/>
<reference key="1">
    <citation type="journal article" date="2005" name="BMC Biol.">
        <title>The complete chloroplast DNA sequences of the charophycean green algae Staurastrum and Zygnema reveal that the chloroplast genome underwent extensive changes during the evolution of the Zygnematales.</title>
        <authorList>
            <person name="Turmel M."/>
            <person name="Otis C."/>
            <person name="Lemieux C."/>
        </authorList>
    </citation>
    <scope>NUCLEOTIDE SEQUENCE [LARGE SCALE GENOMIC DNA]</scope>
</reference>
<dbReference type="EMBL" id="AY958086">
    <property type="protein sequence ID" value="AAX45838.1"/>
    <property type="status" value="ALT_INIT"/>
    <property type="molecule type" value="Genomic_DNA"/>
</dbReference>
<dbReference type="RefSeq" id="YP_636500.1">
    <property type="nucleotide sequence ID" value="NC_008117.1"/>
</dbReference>
<dbReference type="SMR" id="Q32RM6"/>
<dbReference type="GeneID" id="4108158"/>
<dbReference type="GO" id="GO:0009535">
    <property type="term" value="C:chloroplast thylakoid membrane"/>
    <property type="evidence" value="ECO:0007669"/>
    <property type="project" value="UniProtKB-SubCell"/>
</dbReference>
<dbReference type="GO" id="GO:0009523">
    <property type="term" value="C:photosystem II"/>
    <property type="evidence" value="ECO:0007669"/>
    <property type="project" value="UniProtKB-KW"/>
</dbReference>
<dbReference type="GO" id="GO:0016168">
    <property type="term" value="F:chlorophyll binding"/>
    <property type="evidence" value="ECO:0007669"/>
    <property type="project" value="UniProtKB-UniRule"/>
</dbReference>
<dbReference type="GO" id="GO:0045156">
    <property type="term" value="F:electron transporter, transferring electrons within the cyclic electron transport pathway of photosynthesis activity"/>
    <property type="evidence" value="ECO:0007669"/>
    <property type="project" value="InterPro"/>
</dbReference>
<dbReference type="GO" id="GO:0046872">
    <property type="term" value="F:metal ion binding"/>
    <property type="evidence" value="ECO:0007669"/>
    <property type="project" value="UniProtKB-KW"/>
</dbReference>
<dbReference type="GO" id="GO:0009772">
    <property type="term" value="P:photosynthetic electron transport in photosystem II"/>
    <property type="evidence" value="ECO:0007669"/>
    <property type="project" value="InterPro"/>
</dbReference>
<dbReference type="FunFam" id="1.10.10.670:FF:000001">
    <property type="entry name" value="Photosystem II CP43 reaction center protein"/>
    <property type="match status" value="1"/>
</dbReference>
<dbReference type="Gene3D" id="1.10.10.670">
    <property type="entry name" value="photosystem ii from thermosynechococcus elongatus"/>
    <property type="match status" value="1"/>
</dbReference>
<dbReference type="HAMAP" id="MF_01496">
    <property type="entry name" value="PSII_PsbC_CP43"/>
    <property type="match status" value="1"/>
</dbReference>
<dbReference type="InterPro" id="IPR000932">
    <property type="entry name" value="PS_antenna-like"/>
</dbReference>
<dbReference type="InterPro" id="IPR036001">
    <property type="entry name" value="PS_II_antenna-like_sf"/>
</dbReference>
<dbReference type="InterPro" id="IPR005869">
    <property type="entry name" value="PSII_PsbC"/>
</dbReference>
<dbReference type="InterPro" id="IPR044900">
    <property type="entry name" value="PSII_PsbC_sf"/>
</dbReference>
<dbReference type="NCBIfam" id="TIGR01153">
    <property type="entry name" value="psbC"/>
    <property type="match status" value="1"/>
</dbReference>
<dbReference type="Pfam" id="PF00421">
    <property type="entry name" value="PSII"/>
    <property type="match status" value="1"/>
</dbReference>
<dbReference type="SUPFAM" id="SSF161077">
    <property type="entry name" value="Photosystem II antenna protein-like"/>
    <property type="match status" value="1"/>
</dbReference>
<proteinExistence type="inferred from homology"/>